<protein>
    <recommendedName>
        <fullName>Manganese resistance protein MNR2</fullName>
    </recommendedName>
</protein>
<feature type="chain" id="PRO_0000201537" description="Manganese resistance protein MNR2">
    <location>
        <begin position="1"/>
        <end position="969"/>
    </location>
</feature>
<feature type="topological domain" description="Cytoplasmic" evidence="1">
    <location>
        <begin position="1"/>
        <end position="912"/>
    </location>
</feature>
<feature type="transmembrane region" description="Helical" evidence="1">
    <location>
        <begin position="913"/>
        <end position="933"/>
    </location>
</feature>
<feature type="topological domain" description="Extracellular" evidence="1">
    <location>
        <begin position="934"/>
        <end position="941"/>
    </location>
</feature>
<feature type="transmembrane region" description="Helical" evidence="1">
    <location>
        <begin position="942"/>
        <end position="962"/>
    </location>
</feature>
<feature type="topological domain" description="Cytoplasmic" evidence="1">
    <location>
        <begin position="963"/>
        <end position="969"/>
    </location>
</feature>
<feature type="region of interest" description="Disordered" evidence="2">
    <location>
        <begin position="1"/>
        <end position="49"/>
    </location>
</feature>
<feature type="region of interest" description="Disordered" evidence="2">
    <location>
        <begin position="96"/>
        <end position="153"/>
    </location>
</feature>
<feature type="region of interest" description="Disordered" evidence="2">
    <location>
        <begin position="167"/>
        <end position="186"/>
    </location>
</feature>
<feature type="region of interest" description="Disordered" evidence="2">
    <location>
        <begin position="199"/>
        <end position="256"/>
    </location>
</feature>
<feature type="region of interest" description="Disordered" evidence="2">
    <location>
        <begin position="559"/>
        <end position="662"/>
    </location>
</feature>
<feature type="region of interest" description="Disordered" evidence="2">
    <location>
        <begin position="746"/>
        <end position="769"/>
    </location>
</feature>
<feature type="compositionally biased region" description="Basic and acidic residues" evidence="2">
    <location>
        <begin position="1"/>
        <end position="11"/>
    </location>
</feature>
<feature type="compositionally biased region" description="Low complexity" evidence="2">
    <location>
        <begin position="13"/>
        <end position="23"/>
    </location>
</feature>
<feature type="compositionally biased region" description="Basic residues" evidence="2">
    <location>
        <begin position="24"/>
        <end position="36"/>
    </location>
</feature>
<feature type="compositionally biased region" description="Basic and acidic residues" evidence="2">
    <location>
        <begin position="37"/>
        <end position="48"/>
    </location>
</feature>
<feature type="compositionally biased region" description="Polar residues" evidence="2">
    <location>
        <begin position="141"/>
        <end position="152"/>
    </location>
</feature>
<feature type="compositionally biased region" description="Low complexity" evidence="2">
    <location>
        <begin position="225"/>
        <end position="234"/>
    </location>
</feature>
<feature type="compositionally biased region" description="Low complexity" evidence="2">
    <location>
        <begin position="244"/>
        <end position="256"/>
    </location>
</feature>
<feature type="compositionally biased region" description="Basic and acidic residues" evidence="2">
    <location>
        <begin position="565"/>
        <end position="578"/>
    </location>
</feature>
<feature type="compositionally biased region" description="Low complexity" evidence="2">
    <location>
        <begin position="590"/>
        <end position="607"/>
    </location>
</feature>
<feature type="compositionally biased region" description="Low complexity" evidence="2">
    <location>
        <begin position="622"/>
        <end position="632"/>
    </location>
</feature>
<feature type="compositionally biased region" description="Acidic residues" evidence="2">
    <location>
        <begin position="749"/>
        <end position="769"/>
    </location>
</feature>
<feature type="modified residue" description="Phosphoserine" evidence="6 7">
    <location>
        <position position="114"/>
    </location>
</feature>
<feature type="modified residue" description="Phosphoserine" evidence="7 8">
    <location>
        <position position="175"/>
    </location>
</feature>
<feature type="modified residue" description="Phosphothreonine" evidence="8">
    <location>
        <position position="177"/>
    </location>
</feature>
<feature type="modified residue" description="Phosphoserine" evidence="8">
    <location>
        <position position="182"/>
    </location>
</feature>
<feature type="modified residue" description="Phosphoserine" evidence="8">
    <location>
        <position position="383"/>
    </location>
</feature>
<feature type="modified residue" description="Phosphothreonine" evidence="5">
    <location>
        <position position="571"/>
    </location>
</feature>
<feature type="modified residue" description="Phosphoserine" evidence="5">
    <location>
        <position position="576"/>
    </location>
</feature>
<feature type="modified residue" description="Phosphoserine" evidence="8">
    <location>
        <position position="582"/>
    </location>
</feature>
<accession>P35724</accession>
<accession>D6VXM3</accession>
<proteinExistence type="evidence at protein level"/>
<name>MNR2_YEAST</name>
<organism>
    <name type="scientific">Saccharomyces cerevisiae (strain ATCC 204508 / S288c)</name>
    <name type="common">Baker's yeast</name>
    <dbReference type="NCBI Taxonomy" id="559292"/>
    <lineage>
        <taxon>Eukaryota</taxon>
        <taxon>Fungi</taxon>
        <taxon>Dikarya</taxon>
        <taxon>Ascomycota</taxon>
        <taxon>Saccharomycotina</taxon>
        <taxon>Saccharomycetes</taxon>
        <taxon>Saccharomycetales</taxon>
        <taxon>Saccharomycetaceae</taxon>
        <taxon>Saccharomyces</taxon>
    </lineage>
</organism>
<keyword id="KW-0472">Membrane</keyword>
<keyword id="KW-0597">Phosphoprotein</keyword>
<keyword id="KW-1185">Reference proteome</keyword>
<keyword id="KW-0812">Transmembrane</keyword>
<keyword id="KW-1133">Transmembrane helix</keyword>
<dbReference type="EMBL" id="X75781">
    <property type="protein sequence ID" value="CAA53410.1"/>
    <property type="molecule type" value="Genomic_DNA"/>
</dbReference>
<dbReference type="EMBL" id="Z28064">
    <property type="protein sequence ID" value="CAA81901.1"/>
    <property type="molecule type" value="Genomic_DNA"/>
</dbReference>
<dbReference type="EMBL" id="BK006944">
    <property type="protein sequence ID" value="DAA09093.1"/>
    <property type="molecule type" value="Genomic_DNA"/>
</dbReference>
<dbReference type="PIR" id="S37886">
    <property type="entry name" value="S37886"/>
</dbReference>
<dbReference type="RefSeq" id="NP_012859.1">
    <property type="nucleotide sequence ID" value="NM_001179630.1"/>
</dbReference>
<dbReference type="BioGRID" id="34069">
    <property type="interactions" value="123"/>
</dbReference>
<dbReference type="DIP" id="DIP-8080N"/>
<dbReference type="FunCoup" id="P35724">
    <property type="interactions" value="149"/>
</dbReference>
<dbReference type="IntAct" id="P35724">
    <property type="interactions" value="15"/>
</dbReference>
<dbReference type="MINT" id="P35724"/>
<dbReference type="STRING" id="4932.YKL064W"/>
<dbReference type="TCDB" id="1.A.35.2.2">
    <property type="family name" value="the cora metal ion transporter (mit) family"/>
</dbReference>
<dbReference type="GlyGen" id="P35724">
    <property type="glycosylation" value="1 site"/>
</dbReference>
<dbReference type="iPTMnet" id="P35724"/>
<dbReference type="PaxDb" id="4932-YKL064W"/>
<dbReference type="PeptideAtlas" id="P35724"/>
<dbReference type="EnsemblFungi" id="YKL064W_mRNA">
    <property type="protein sequence ID" value="YKL064W"/>
    <property type="gene ID" value="YKL064W"/>
</dbReference>
<dbReference type="GeneID" id="853801"/>
<dbReference type="KEGG" id="sce:YKL064W"/>
<dbReference type="AGR" id="SGD:S000001547"/>
<dbReference type="SGD" id="S000001547">
    <property type="gene designation" value="MNR2"/>
</dbReference>
<dbReference type="VEuPathDB" id="FungiDB:YKL064W"/>
<dbReference type="eggNOG" id="ENOG502QPTQ">
    <property type="taxonomic scope" value="Eukaryota"/>
</dbReference>
<dbReference type="HOGENOM" id="CLU_007127_3_0_1"/>
<dbReference type="InParanoid" id="P35724"/>
<dbReference type="OMA" id="DVCFPDY"/>
<dbReference type="OrthoDB" id="29879at2759"/>
<dbReference type="BioCyc" id="YEAST:G3O-31862-MONOMER"/>
<dbReference type="BioGRID-ORCS" id="853801">
    <property type="hits" value="0 hits in 10 CRISPR screens"/>
</dbReference>
<dbReference type="PRO" id="PR:P35724"/>
<dbReference type="Proteomes" id="UP000002311">
    <property type="component" value="Chromosome XI"/>
</dbReference>
<dbReference type="RNAct" id="P35724">
    <property type="molecule type" value="protein"/>
</dbReference>
<dbReference type="GO" id="GO:0000329">
    <property type="term" value="C:fungal-type vacuole membrane"/>
    <property type="evidence" value="ECO:0000314"/>
    <property type="project" value="SGD"/>
</dbReference>
<dbReference type="GO" id="GO:1990816">
    <property type="term" value="C:vacuole-mitochondrion membrane contact site"/>
    <property type="evidence" value="ECO:0000314"/>
    <property type="project" value="SGD"/>
</dbReference>
<dbReference type="GO" id="GO:0015095">
    <property type="term" value="F:magnesium ion transmembrane transporter activity"/>
    <property type="evidence" value="ECO:0000318"/>
    <property type="project" value="GO_Central"/>
</dbReference>
<dbReference type="GO" id="GO:0010961">
    <property type="term" value="P:intracellular magnesium ion homeostasis"/>
    <property type="evidence" value="ECO:0000315"/>
    <property type="project" value="SGD"/>
</dbReference>
<dbReference type="CDD" id="cd12829">
    <property type="entry name" value="Alr1p-like"/>
    <property type="match status" value="1"/>
</dbReference>
<dbReference type="FunFam" id="1.20.58.340:FF:000008">
    <property type="entry name" value="CorA family metal ion transporter"/>
    <property type="match status" value="1"/>
</dbReference>
<dbReference type="Gene3D" id="3.30.460.20">
    <property type="entry name" value="CorA soluble domain-like"/>
    <property type="match status" value="1"/>
</dbReference>
<dbReference type="Gene3D" id="1.20.58.340">
    <property type="entry name" value="Magnesium transport protein CorA, transmembrane region"/>
    <property type="match status" value="2"/>
</dbReference>
<dbReference type="InterPro" id="IPR044089">
    <property type="entry name" value="Alr1-like"/>
</dbReference>
<dbReference type="InterPro" id="IPR045861">
    <property type="entry name" value="CorA_cytoplasmic_dom"/>
</dbReference>
<dbReference type="InterPro" id="IPR045863">
    <property type="entry name" value="CorA_TM1_TM2"/>
</dbReference>
<dbReference type="InterPro" id="IPR002523">
    <property type="entry name" value="MgTranspt_CorA/ZnTranspt_ZntB"/>
</dbReference>
<dbReference type="PANTHER" id="PTHR21535">
    <property type="entry name" value="MAGNESIUM AND COBALT TRANSPORT PROTEIN/MITOCHONDRIAL IMPORT INNER MEMBRANE TRANSLOCASE SUBUNIT TIM8"/>
    <property type="match status" value="1"/>
</dbReference>
<dbReference type="PANTHER" id="PTHR21535:SF51">
    <property type="entry name" value="MANGANESE RESISTANCE PROTEIN MNR2"/>
    <property type="match status" value="1"/>
</dbReference>
<dbReference type="Pfam" id="PF01544">
    <property type="entry name" value="CorA"/>
    <property type="match status" value="1"/>
</dbReference>
<dbReference type="SUPFAM" id="SSF143865">
    <property type="entry name" value="CorA soluble domain-like"/>
    <property type="match status" value="1"/>
</dbReference>
<dbReference type="SUPFAM" id="SSF144083">
    <property type="entry name" value="Magnesium transport protein CorA, transmembrane region"/>
    <property type="match status" value="1"/>
</dbReference>
<comment type="subcellular location">
    <subcellularLocation>
        <location>Membrane</location>
        <topology>Multi-pass membrane protein</topology>
    </subcellularLocation>
</comment>
<comment type="miscellaneous">
    <text evidence="3">Present with 259 molecules/cell in log phase SD medium.</text>
</comment>
<comment type="similarity">
    <text evidence="4">Belongs to the CorA metal ion transporter (MIT) (TC 1.A.35) family.</text>
</comment>
<gene>
    <name type="primary">MNR2</name>
    <name type="ordered locus">YKL064W</name>
</gene>
<reference key="1">
    <citation type="journal article" date="1994" name="Yeast">
        <title>Sequence of a 28.6 kb region of yeast chromosome XI includes the FBA1 and TOA2 genes, an open reading frame (ORF) similar to a translationally controlled tumour protein, one ORF containing motifs also found in plant storage proteins and 13 ORFs with weak or no homology to known proteins.</title>
        <authorList>
            <person name="Rasmussen S.W."/>
        </authorList>
    </citation>
    <scope>NUCLEOTIDE SEQUENCE [GENOMIC DNA]</scope>
    <source>
        <strain>ATCC 204508 / S288c</strain>
    </source>
</reference>
<reference key="2">
    <citation type="journal article" date="1994" name="Nature">
        <title>Complete DNA sequence of yeast chromosome XI.</title>
        <authorList>
            <person name="Dujon B."/>
            <person name="Alexandraki D."/>
            <person name="Andre B."/>
            <person name="Ansorge W."/>
            <person name="Baladron V."/>
            <person name="Ballesta J.P.G."/>
            <person name="Banrevi A."/>
            <person name="Bolle P.-A."/>
            <person name="Bolotin-Fukuhara M."/>
            <person name="Bossier P."/>
            <person name="Bou G."/>
            <person name="Boyer J."/>
            <person name="Buitrago M.J."/>
            <person name="Cheret G."/>
            <person name="Colleaux L."/>
            <person name="Daignan-Fornier B."/>
            <person name="del Rey F."/>
            <person name="Dion C."/>
            <person name="Domdey H."/>
            <person name="Duesterhoeft A."/>
            <person name="Duesterhus S."/>
            <person name="Entian K.-D."/>
            <person name="Erfle H."/>
            <person name="Esteban P.F."/>
            <person name="Feldmann H."/>
            <person name="Fernandes L."/>
            <person name="Fobo G.M."/>
            <person name="Fritz C."/>
            <person name="Fukuhara H."/>
            <person name="Gabel C."/>
            <person name="Gaillon L."/>
            <person name="Garcia-Cantalejo J.M."/>
            <person name="Garcia-Ramirez J.J."/>
            <person name="Gent M.E."/>
            <person name="Ghazvini M."/>
            <person name="Goffeau A."/>
            <person name="Gonzalez A."/>
            <person name="Grothues D."/>
            <person name="Guerreiro P."/>
            <person name="Hegemann J.H."/>
            <person name="Hewitt N."/>
            <person name="Hilger F."/>
            <person name="Hollenberg C.P."/>
            <person name="Horaitis O."/>
            <person name="Indge K.J."/>
            <person name="Jacquier A."/>
            <person name="James C.M."/>
            <person name="Jauniaux J.-C."/>
            <person name="Jimenez A."/>
            <person name="Keuchel H."/>
            <person name="Kirchrath L."/>
            <person name="Kleine K."/>
            <person name="Koetter P."/>
            <person name="Legrain P."/>
            <person name="Liebl S."/>
            <person name="Louis E.J."/>
            <person name="Maia e Silva A."/>
            <person name="Marck C."/>
            <person name="Monnier A.-L."/>
            <person name="Moestl D."/>
            <person name="Mueller S."/>
            <person name="Obermaier B."/>
            <person name="Oliver S.G."/>
            <person name="Pallier C."/>
            <person name="Pascolo S."/>
            <person name="Pfeiffer F."/>
            <person name="Philippsen P."/>
            <person name="Planta R.J."/>
            <person name="Pohl F.M."/>
            <person name="Pohl T.M."/>
            <person name="Poehlmann R."/>
            <person name="Portetelle D."/>
            <person name="Purnelle B."/>
            <person name="Puzos V."/>
            <person name="Ramezani Rad M."/>
            <person name="Rasmussen S.W."/>
            <person name="Remacha M.A."/>
            <person name="Revuelta J.L."/>
            <person name="Richard G.-F."/>
            <person name="Rieger M."/>
            <person name="Rodrigues-Pousada C."/>
            <person name="Rose M."/>
            <person name="Rupp T."/>
            <person name="Santos M.A."/>
            <person name="Schwager C."/>
            <person name="Sensen C."/>
            <person name="Skala J."/>
            <person name="Soares H."/>
            <person name="Sor F."/>
            <person name="Stegemann J."/>
            <person name="Tettelin H."/>
            <person name="Thierry A."/>
            <person name="Tzermia M."/>
            <person name="Urrestarazu L.A."/>
            <person name="van Dyck L."/>
            <person name="van Vliet-Reedijk J.C."/>
            <person name="Valens M."/>
            <person name="Vandenbol M."/>
            <person name="Vilela C."/>
            <person name="Vissers S."/>
            <person name="von Wettstein D."/>
            <person name="Voss H."/>
            <person name="Wiemann S."/>
            <person name="Xu G."/>
            <person name="Zimmermann J."/>
            <person name="Haasemann M."/>
            <person name="Becker I."/>
            <person name="Mewes H.-W."/>
        </authorList>
    </citation>
    <scope>NUCLEOTIDE SEQUENCE [LARGE SCALE GENOMIC DNA]</scope>
    <source>
        <strain>ATCC 204508 / S288c</strain>
    </source>
</reference>
<reference key="3">
    <citation type="journal article" date="2014" name="G3 (Bethesda)">
        <title>The reference genome sequence of Saccharomyces cerevisiae: Then and now.</title>
        <authorList>
            <person name="Engel S.R."/>
            <person name="Dietrich F.S."/>
            <person name="Fisk D.G."/>
            <person name="Binkley G."/>
            <person name="Balakrishnan R."/>
            <person name="Costanzo M.C."/>
            <person name="Dwight S.S."/>
            <person name="Hitz B.C."/>
            <person name="Karra K."/>
            <person name="Nash R.S."/>
            <person name="Weng S."/>
            <person name="Wong E.D."/>
            <person name="Lloyd P."/>
            <person name="Skrzypek M.S."/>
            <person name="Miyasato S.R."/>
            <person name="Simison M."/>
            <person name="Cherry J.M."/>
        </authorList>
    </citation>
    <scope>GENOME REANNOTATION</scope>
    <source>
        <strain>ATCC 204508 / S288c</strain>
    </source>
</reference>
<reference key="4">
    <citation type="journal article" date="2003" name="Nature">
        <title>Global analysis of protein expression in yeast.</title>
        <authorList>
            <person name="Ghaemmaghami S."/>
            <person name="Huh W.-K."/>
            <person name="Bower K."/>
            <person name="Howson R.W."/>
            <person name="Belle A."/>
            <person name="Dephoure N."/>
            <person name="O'Shea E.K."/>
            <person name="Weissman J.S."/>
        </authorList>
    </citation>
    <scope>LEVEL OF PROTEIN EXPRESSION [LARGE SCALE ANALYSIS]</scope>
</reference>
<reference key="5">
    <citation type="journal article" date="2006" name="Proc. Natl. Acad. Sci. U.S.A.">
        <title>A global topology map of the Saccharomyces cerevisiae membrane proteome.</title>
        <authorList>
            <person name="Kim H."/>
            <person name="Melen K."/>
            <person name="Oesterberg M."/>
            <person name="von Heijne G."/>
        </authorList>
    </citation>
    <scope>TOPOLOGY [LARGE SCALE ANALYSIS]</scope>
    <source>
        <strain>ATCC 208353 / W303-1A</strain>
    </source>
</reference>
<reference key="6">
    <citation type="journal article" date="2007" name="J. Proteome Res.">
        <title>Large-scale phosphorylation analysis of alpha-factor-arrested Saccharomyces cerevisiae.</title>
        <authorList>
            <person name="Li X."/>
            <person name="Gerber S.A."/>
            <person name="Rudner A.D."/>
            <person name="Beausoleil S.A."/>
            <person name="Haas W."/>
            <person name="Villen J."/>
            <person name="Elias J.E."/>
            <person name="Gygi S.P."/>
        </authorList>
    </citation>
    <scope>PHOSPHORYLATION [LARGE SCALE ANALYSIS] AT SER-114</scope>
    <scope>IDENTIFICATION BY MASS SPECTROMETRY [LARGE SCALE ANALYSIS]</scope>
    <source>
        <strain>ADR376</strain>
    </source>
</reference>
<reference key="7">
    <citation type="journal article" date="2007" name="Proc. Natl. Acad. Sci. U.S.A.">
        <title>Analysis of phosphorylation sites on proteins from Saccharomyces cerevisiae by electron transfer dissociation (ETD) mass spectrometry.</title>
        <authorList>
            <person name="Chi A."/>
            <person name="Huttenhower C."/>
            <person name="Geer L.Y."/>
            <person name="Coon J.J."/>
            <person name="Syka J.E.P."/>
            <person name="Bai D.L."/>
            <person name="Shabanowitz J."/>
            <person name="Burke D.J."/>
            <person name="Troyanskaya O.G."/>
            <person name="Hunt D.F."/>
        </authorList>
    </citation>
    <scope>PHOSPHORYLATION [LARGE SCALE ANALYSIS] AT THR-571 AND SER-576</scope>
    <scope>IDENTIFICATION BY MASS SPECTROMETRY [LARGE SCALE ANALYSIS]</scope>
</reference>
<reference key="8">
    <citation type="journal article" date="2008" name="Mol. Cell. Proteomics">
        <title>A multidimensional chromatography technology for in-depth phosphoproteome analysis.</title>
        <authorList>
            <person name="Albuquerque C.P."/>
            <person name="Smolka M.B."/>
            <person name="Payne S.H."/>
            <person name="Bafna V."/>
            <person name="Eng J."/>
            <person name="Zhou H."/>
        </authorList>
    </citation>
    <scope>PHOSPHORYLATION [LARGE SCALE ANALYSIS] AT SER-114 AND SER-175</scope>
    <scope>IDENTIFICATION BY MASS SPECTROMETRY [LARGE SCALE ANALYSIS]</scope>
</reference>
<reference key="9">
    <citation type="journal article" date="2009" name="Science">
        <title>Global analysis of Cdk1 substrate phosphorylation sites provides insights into evolution.</title>
        <authorList>
            <person name="Holt L.J."/>
            <person name="Tuch B.B."/>
            <person name="Villen J."/>
            <person name="Johnson A.D."/>
            <person name="Gygi S.P."/>
            <person name="Morgan D.O."/>
        </authorList>
    </citation>
    <scope>PHOSPHORYLATION [LARGE SCALE ANALYSIS] AT SER-175; THR-177; SER-182; SER-383 AND SER-582</scope>
    <scope>IDENTIFICATION BY MASS SPECTROMETRY [LARGE SCALE ANALYSIS]</scope>
</reference>
<evidence type="ECO:0000255" key="1"/>
<evidence type="ECO:0000256" key="2">
    <source>
        <dbReference type="SAM" id="MobiDB-lite"/>
    </source>
</evidence>
<evidence type="ECO:0000269" key="3">
    <source>
    </source>
</evidence>
<evidence type="ECO:0000305" key="4"/>
<evidence type="ECO:0007744" key="5">
    <source>
    </source>
</evidence>
<evidence type="ECO:0007744" key="6">
    <source>
    </source>
</evidence>
<evidence type="ECO:0007744" key="7">
    <source>
    </source>
</evidence>
<evidence type="ECO:0007744" key="8">
    <source>
    </source>
</evidence>
<sequence>MSTDNSQKDEGVPLLSPYSSSPQLRKKKRNQKRRKDKFVGHLKSDSRRPTQLLHDNLQHNHGQITDFDQIDSWGMLHESDSTSNDIIKSEDPSLKGAFIDHRPSMSQPREGPQSVSSTVQPQPIMKFSTPSYKKPAGLRPSDQNRSLVSDLSPSELESWLKRRKSVHKSFVDENSPTDRRQSNANNDVVIDVDALMNHVNNNASTGVNDNSKRRKKKRGSDDSSNKNSKSTSSDSNDEEDEYNSRPSSSLSSNNSSLDDVCLVLDDEGSEVPKAWPDCTVLEEFSKEETERLRSQAIQDAEAFHFQYDEDEEDGTSNEDGILFSKPIVTNIDVPELGNRRVNETENLKNGRLRPKRIAPWHLIQRPMVLGSNSTKDSKSRIQSGLQDNLLVGRNIQYPPHIISNNPEHFRFTYFRVDLDSTVHSPTISGLLQPGQKFQDLFVASIYSQDNSAGHIKTHPNSPTPGIKAETVSQLQGLTAKNPSTLSSMSVANIEDVPPFWLDVSNPTEEEMKILSKAFGIHPLTTEDIFLGEVREKVELFRDYYLICFRSFDIVAEKHVRRRRKEKQESATLDHESISRRKSQAYGATMSNESNANNNNSTSNASRSKWLPSILRARRRSSANRTTNTSSSSYKRRVKSEKKKMEENEKFKRKSGDRHKPREGELEPLNVYIIVFRTGVLTFHFAPTPHPINVRRRARLLKDYLNVTSDWIAYALIDDITDAFAPMIELIEDEVYEIEDAILKMHQSDDSSDSDSSDSDSDSGASDEDAFPFDVYSKKTSYSSAKSSVSSRSMSTSEASFNANLIGWKRKGDMLRRIGECRKRVMSILRLLGSKADVIKGFAKRYNEQWEASPQSEIAMYLGDIQDHIVTMVSSLNHYEKLLSRSHSNYLAQINIDMTKVNNDMNDVLGKITILGTIVLPMNVITGLWGMNVIVPGQYRDSLTWFIGIVLFMCMLACSAYMYTKRRFGF</sequence>